<organism>
    <name type="scientific">Vibrio cholerae serotype O1 (strain ATCC 39541 / Classical Ogawa 395 / O395)</name>
    <dbReference type="NCBI Taxonomy" id="345073"/>
    <lineage>
        <taxon>Bacteria</taxon>
        <taxon>Pseudomonadati</taxon>
        <taxon>Pseudomonadota</taxon>
        <taxon>Gammaproteobacteria</taxon>
        <taxon>Vibrionales</taxon>
        <taxon>Vibrionaceae</taxon>
        <taxon>Vibrio</taxon>
    </lineage>
</organism>
<evidence type="ECO:0000255" key="1">
    <source>
        <dbReference type="HAMAP-Rule" id="MF_01064"/>
    </source>
</evidence>
<accession>A5F359</accession>
<accession>C3LYN6</accession>
<sequence length="67" mass="7179">MKVYDCCELVRELYAQIGSGDQGYIPQAISCAVRALNEIAADTALPLAAREKAAFAAANLLISDFED</sequence>
<comment type="similarity">
    <text evidence="1">Belongs to the UPF0253 family.</text>
</comment>
<feature type="chain" id="PRO_1000073014" description="UPF0253 protein VC0395_A0398/VC395_0888">
    <location>
        <begin position="1"/>
        <end position="67"/>
    </location>
</feature>
<name>Y1598_VIBC3</name>
<protein>
    <recommendedName>
        <fullName evidence="1">UPF0253 protein VC0395_A0398/VC395_0888</fullName>
    </recommendedName>
</protein>
<reference key="1">
    <citation type="submission" date="2007-03" db="EMBL/GenBank/DDBJ databases">
        <authorList>
            <person name="Heidelberg J."/>
        </authorList>
    </citation>
    <scope>NUCLEOTIDE SEQUENCE [LARGE SCALE GENOMIC DNA]</scope>
    <source>
        <strain>ATCC 39541 / Classical Ogawa 395 / O395</strain>
    </source>
</reference>
<reference key="2">
    <citation type="journal article" date="2008" name="PLoS ONE">
        <title>A recalibrated molecular clock and independent origins for the cholera pandemic clones.</title>
        <authorList>
            <person name="Feng L."/>
            <person name="Reeves P.R."/>
            <person name="Lan R."/>
            <person name="Ren Y."/>
            <person name="Gao C."/>
            <person name="Zhou Z."/>
            <person name="Ren Y."/>
            <person name="Cheng J."/>
            <person name="Wang W."/>
            <person name="Wang J."/>
            <person name="Qian W."/>
            <person name="Li D."/>
            <person name="Wang L."/>
        </authorList>
    </citation>
    <scope>NUCLEOTIDE SEQUENCE [LARGE SCALE GENOMIC DNA]</scope>
    <source>
        <strain>ATCC 39541 / Classical Ogawa 395 / O395</strain>
    </source>
</reference>
<dbReference type="EMBL" id="CP000627">
    <property type="protein sequence ID" value="ABQ20769.1"/>
    <property type="molecule type" value="Genomic_DNA"/>
</dbReference>
<dbReference type="EMBL" id="CP001235">
    <property type="protein sequence ID" value="ACP08902.1"/>
    <property type="molecule type" value="Genomic_DNA"/>
</dbReference>
<dbReference type="RefSeq" id="WP_000870111.1">
    <property type="nucleotide sequence ID" value="NZ_JAACZH010000033.1"/>
</dbReference>
<dbReference type="SMR" id="A5F359"/>
<dbReference type="KEGG" id="vco:VC0395_A0398"/>
<dbReference type="KEGG" id="vcr:VC395_0888"/>
<dbReference type="PATRIC" id="fig|345073.21.peg.861"/>
<dbReference type="eggNOG" id="ENOG5032Z3X">
    <property type="taxonomic scope" value="Bacteria"/>
</dbReference>
<dbReference type="HOGENOM" id="CLU_190008_0_0_6"/>
<dbReference type="OrthoDB" id="5900992at2"/>
<dbReference type="Proteomes" id="UP000000249">
    <property type="component" value="Chromosome 2"/>
</dbReference>
<dbReference type="HAMAP" id="MF_01064">
    <property type="entry name" value="UPF0253"/>
    <property type="match status" value="1"/>
</dbReference>
<dbReference type="InterPro" id="IPR009624">
    <property type="entry name" value="UPF0253"/>
</dbReference>
<dbReference type="NCBIfam" id="NF003436">
    <property type="entry name" value="PRK04964.1"/>
    <property type="match status" value="1"/>
</dbReference>
<dbReference type="Pfam" id="PF06786">
    <property type="entry name" value="UPF0253"/>
    <property type="match status" value="1"/>
</dbReference>
<proteinExistence type="inferred from homology"/>
<gene>
    <name type="ordered locus">VC0395_A0398</name>
    <name type="ordered locus">VC395_0888</name>
</gene>